<evidence type="ECO:0000255" key="1">
    <source>
        <dbReference type="HAMAP-Rule" id="MF_01850"/>
    </source>
</evidence>
<sequence length="353" mass="39640">MRKAKNAVVMQKQQYNINKLQKRLRRHVGQAIADYAMIEEGDRIMVCLSGGKDSYTLLEILRNLQQSAPVNFSLVAVNLDQKQPGFPAHVLPEYLAAQGVEYHIVTEDTYHIVKDKIPEGKTTCSLCSRLRRGILYRTATELGATRIALGHHQDDILQTLFLNMFYGGKLKGMPPKLMSDDGKHIVIRPLAYCREKDIARFAQARQFPIIPCNLCGSQPNLQRQVIGDMLRDWDKRYPGRSETLFRAMQNVVPSHLSDTHLFDFKGLMQGSAVVDGGDIAFDRESFPAQPAGWQDLMDDDLPVSSRNDNWTCSNCAEYAQSAPPTQQRKALTGPQARIAGAPVIPLATRHPPW</sequence>
<gene>
    <name evidence="1" type="primary">ttcA</name>
    <name type="ordered locus">SG1495</name>
</gene>
<keyword id="KW-0004">4Fe-4S</keyword>
<keyword id="KW-0067">ATP-binding</keyword>
<keyword id="KW-0963">Cytoplasm</keyword>
<keyword id="KW-0408">Iron</keyword>
<keyword id="KW-0411">Iron-sulfur</keyword>
<keyword id="KW-0460">Magnesium</keyword>
<keyword id="KW-0479">Metal-binding</keyword>
<keyword id="KW-0547">Nucleotide-binding</keyword>
<keyword id="KW-0694">RNA-binding</keyword>
<keyword id="KW-0808">Transferase</keyword>
<keyword id="KW-0819">tRNA processing</keyword>
<keyword id="KW-0820">tRNA-binding</keyword>
<accession>Q2NSV5</accession>
<dbReference type="EC" id="2.8.1.-" evidence="1"/>
<dbReference type="EMBL" id="AP008232">
    <property type="protein sequence ID" value="BAE74770.1"/>
    <property type="molecule type" value="Genomic_DNA"/>
</dbReference>
<dbReference type="SMR" id="Q2NSV5"/>
<dbReference type="STRING" id="343509.SG1495"/>
<dbReference type="KEGG" id="sgl:SG1495"/>
<dbReference type="eggNOG" id="COG0037">
    <property type="taxonomic scope" value="Bacteria"/>
</dbReference>
<dbReference type="HOGENOM" id="CLU_026481_0_0_6"/>
<dbReference type="OrthoDB" id="9801054at2"/>
<dbReference type="BioCyc" id="SGLO343509:SGP1_RS13230-MONOMER"/>
<dbReference type="Proteomes" id="UP000001932">
    <property type="component" value="Chromosome"/>
</dbReference>
<dbReference type="GO" id="GO:0005737">
    <property type="term" value="C:cytoplasm"/>
    <property type="evidence" value="ECO:0007669"/>
    <property type="project" value="UniProtKB-SubCell"/>
</dbReference>
<dbReference type="GO" id="GO:0051539">
    <property type="term" value="F:4 iron, 4 sulfur cluster binding"/>
    <property type="evidence" value="ECO:0007669"/>
    <property type="project" value="UniProtKB-UniRule"/>
</dbReference>
<dbReference type="GO" id="GO:0005524">
    <property type="term" value="F:ATP binding"/>
    <property type="evidence" value="ECO:0007669"/>
    <property type="project" value="UniProtKB-UniRule"/>
</dbReference>
<dbReference type="GO" id="GO:0000287">
    <property type="term" value="F:magnesium ion binding"/>
    <property type="evidence" value="ECO:0007669"/>
    <property type="project" value="UniProtKB-UniRule"/>
</dbReference>
<dbReference type="GO" id="GO:0016783">
    <property type="term" value="F:sulfurtransferase activity"/>
    <property type="evidence" value="ECO:0007669"/>
    <property type="project" value="UniProtKB-UniRule"/>
</dbReference>
<dbReference type="GO" id="GO:0000049">
    <property type="term" value="F:tRNA binding"/>
    <property type="evidence" value="ECO:0007669"/>
    <property type="project" value="UniProtKB-KW"/>
</dbReference>
<dbReference type="GO" id="GO:0034227">
    <property type="term" value="P:tRNA thio-modification"/>
    <property type="evidence" value="ECO:0007669"/>
    <property type="project" value="UniProtKB-UniRule"/>
</dbReference>
<dbReference type="CDD" id="cd24138">
    <property type="entry name" value="TtcA-like"/>
    <property type="match status" value="1"/>
</dbReference>
<dbReference type="Gene3D" id="3.40.50.620">
    <property type="entry name" value="HUPs"/>
    <property type="match status" value="1"/>
</dbReference>
<dbReference type="HAMAP" id="MF_01850">
    <property type="entry name" value="TtcA"/>
    <property type="match status" value="1"/>
</dbReference>
<dbReference type="InterPro" id="IPR014729">
    <property type="entry name" value="Rossmann-like_a/b/a_fold"/>
</dbReference>
<dbReference type="InterPro" id="IPR011063">
    <property type="entry name" value="TilS/TtcA_N"/>
</dbReference>
<dbReference type="InterPro" id="IPR012089">
    <property type="entry name" value="tRNA_Cyd_32_2_STrfase"/>
</dbReference>
<dbReference type="NCBIfam" id="NF007972">
    <property type="entry name" value="PRK10696.1"/>
    <property type="match status" value="1"/>
</dbReference>
<dbReference type="PANTHER" id="PTHR43686:SF1">
    <property type="entry name" value="AMINOTRAN_5 DOMAIN-CONTAINING PROTEIN"/>
    <property type="match status" value="1"/>
</dbReference>
<dbReference type="PANTHER" id="PTHR43686">
    <property type="entry name" value="SULFURTRANSFERASE-RELATED"/>
    <property type="match status" value="1"/>
</dbReference>
<dbReference type="Pfam" id="PF01171">
    <property type="entry name" value="ATP_bind_3"/>
    <property type="match status" value="1"/>
</dbReference>
<dbReference type="SUPFAM" id="SSF52402">
    <property type="entry name" value="Adenine nucleotide alpha hydrolases-like"/>
    <property type="match status" value="1"/>
</dbReference>
<protein>
    <recommendedName>
        <fullName evidence="1">tRNA-cytidine(32) 2-sulfurtransferase</fullName>
        <ecNumber evidence="1">2.8.1.-</ecNumber>
    </recommendedName>
    <alternativeName>
        <fullName evidence="1">Two-thiocytidine biosynthesis protein A</fullName>
    </alternativeName>
    <alternativeName>
        <fullName evidence="1">tRNA 2-thiocytidine biosynthesis protein TtcA</fullName>
    </alternativeName>
</protein>
<name>TTCA_SODGM</name>
<comment type="function">
    <text evidence="1">Catalyzes the ATP-dependent 2-thiolation of cytidine in position 32 of tRNA, to form 2-thiocytidine (s(2)C32). The sulfur atoms are provided by the cysteine/cysteine desulfurase (IscS) system.</text>
</comment>
<comment type="catalytic activity">
    <reaction evidence="1">
        <text>cytidine(32) in tRNA + S-sulfanyl-L-cysteinyl-[cysteine desulfurase] + AH2 + ATP = 2-thiocytidine(32) in tRNA + L-cysteinyl-[cysteine desulfurase] + A + AMP + diphosphate + H(+)</text>
        <dbReference type="Rhea" id="RHEA:57048"/>
        <dbReference type="Rhea" id="RHEA-COMP:10288"/>
        <dbReference type="Rhea" id="RHEA-COMP:12157"/>
        <dbReference type="Rhea" id="RHEA-COMP:12158"/>
        <dbReference type="Rhea" id="RHEA-COMP:14821"/>
        <dbReference type="ChEBI" id="CHEBI:13193"/>
        <dbReference type="ChEBI" id="CHEBI:15378"/>
        <dbReference type="ChEBI" id="CHEBI:17499"/>
        <dbReference type="ChEBI" id="CHEBI:29950"/>
        <dbReference type="ChEBI" id="CHEBI:30616"/>
        <dbReference type="ChEBI" id="CHEBI:33019"/>
        <dbReference type="ChEBI" id="CHEBI:61963"/>
        <dbReference type="ChEBI" id="CHEBI:82748"/>
        <dbReference type="ChEBI" id="CHEBI:141453"/>
        <dbReference type="ChEBI" id="CHEBI:456215"/>
    </reaction>
    <physiologicalReaction direction="left-to-right" evidence="1">
        <dbReference type="Rhea" id="RHEA:57049"/>
    </physiologicalReaction>
</comment>
<comment type="cofactor">
    <cofactor evidence="1">
        <name>Mg(2+)</name>
        <dbReference type="ChEBI" id="CHEBI:18420"/>
    </cofactor>
</comment>
<comment type="cofactor">
    <cofactor evidence="1">
        <name>[4Fe-4S] cluster</name>
        <dbReference type="ChEBI" id="CHEBI:49883"/>
    </cofactor>
    <text evidence="1">Binds 1 [4Fe-4S] cluster per subunit. The cluster is chelated by three Cys residues, the fourth Fe has a free coordination site that may bind a sulfur atom transferred from the persulfide of IscS.</text>
</comment>
<comment type="pathway">
    <text evidence="1">tRNA modification.</text>
</comment>
<comment type="subunit">
    <text evidence="1">Homodimer.</text>
</comment>
<comment type="subcellular location">
    <subcellularLocation>
        <location evidence="1">Cytoplasm</location>
    </subcellularLocation>
</comment>
<comment type="miscellaneous">
    <text evidence="1">The thiolation reaction likely consists of two steps: a first activation step by ATP to form an adenylated intermediate of the target base of tRNA, and a second nucleophilic substitution step of the sulfur (S) atom supplied by the hydrosulfide attached to the Fe-S cluster.</text>
</comment>
<comment type="similarity">
    <text evidence="1">Belongs to the TtcA family.</text>
</comment>
<feature type="chain" id="PRO_0000348857" description="tRNA-cytidine(32) 2-sulfurtransferase">
    <location>
        <begin position="1"/>
        <end position="353"/>
    </location>
</feature>
<feature type="short sequence motif" description="PP-loop motif" evidence="1">
    <location>
        <begin position="49"/>
        <end position="54"/>
    </location>
</feature>
<feature type="binding site" evidence="1">
    <location>
        <position position="124"/>
    </location>
    <ligand>
        <name>[4Fe-4S] cluster</name>
        <dbReference type="ChEBI" id="CHEBI:49883"/>
    </ligand>
</feature>
<feature type="binding site" evidence="1">
    <location>
        <position position="127"/>
    </location>
    <ligand>
        <name>[4Fe-4S] cluster</name>
        <dbReference type="ChEBI" id="CHEBI:49883"/>
    </ligand>
</feature>
<feature type="binding site" evidence="1">
    <location>
        <position position="215"/>
    </location>
    <ligand>
        <name>[4Fe-4S] cluster</name>
        <dbReference type="ChEBI" id="CHEBI:49883"/>
    </ligand>
</feature>
<proteinExistence type="inferred from homology"/>
<reference key="1">
    <citation type="journal article" date="2006" name="Genome Res.">
        <title>Massive genome erosion and functional adaptations provide insights into the symbiotic lifestyle of Sodalis glossinidius in the tsetse host.</title>
        <authorList>
            <person name="Toh H."/>
            <person name="Weiss B.L."/>
            <person name="Perkin S.A.H."/>
            <person name="Yamashita A."/>
            <person name="Oshima K."/>
            <person name="Hattori M."/>
            <person name="Aksoy S."/>
        </authorList>
    </citation>
    <scope>NUCLEOTIDE SEQUENCE [LARGE SCALE GENOMIC DNA]</scope>
    <source>
        <strain>morsitans</strain>
    </source>
</reference>
<organism>
    <name type="scientific">Sodalis glossinidius (strain morsitans)</name>
    <dbReference type="NCBI Taxonomy" id="343509"/>
    <lineage>
        <taxon>Bacteria</taxon>
        <taxon>Pseudomonadati</taxon>
        <taxon>Pseudomonadota</taxon>
        <taxon>Gammaproteobacteria</taxon>
        <taxon>Enterobacterales</taxon>
        <taxon>Bruguierivoracaceae</taxon>
        <taxon>Sodalis</taxon>
    </lineage>
</organism>